<accession>O60110</accession>
<feature type="chain" id="PRO_0000353838" description="TPR repeat protein oca3">
    <location>
        <begin position="1"/>
        <end position="282"/>
    </location>
</feature>
<feature type="repeat" description="TPR 1">
    <location>
        <begin position="16"/>
        <end position="50"/>
    </location>
</feature>
<feature type="repeat" description="TPR 2">
    <location>
        <begin position="71"/>
        <end position="104"/>
    </location>
</feature>
<feature type="repeat" description="TPR 3">
    <location>
        <begin position="139"/>
        <end position="172"/>
    </location>
</feature>
<feature type="repeat" description="TPR 4">
    <location>
        <begin position="174"/>
        <end position="211"/>
    </location>
</feature>
<proteinExistence type="predicted"/>
<evidence type="ECO:0000269" key="1">
    <source>
    </source>
</evidence>
<evidence type="ECO:0000269" key="2">
    <source>
    </source>
</evidence>
<name>OCA3_SCHPO</name>
<comment type="function">
    <text evidence="1">May be involved in cell cycle regulation.</text>
</comment>
<comment type="subcellular location">
    <subcellularLocation>
        <location evidence="2">Cytoplasm</location>
    </subcellularLocation>
    <subcellularLocation>
        <location evidence="2">Nucleus</location>
    </subcellularLocation>
    <text>Also localizes to the barrier septum.</text>
</comment>
<gene>
    <name type="primary">oca3</name>
    <name type="ORF">SPBC15C4.01c</name>
</gene>
<keyword id="KW-0131">Cell cycle</keyword>
<keyword id="KW-0963">Cytoplasm</keyword>
<keyword id="KW-0539">Nucleus</keyword>
<keyword id="KW-1185">Reference proteome</keyword>
<keyword id="KW-0677">Repeat</keyword>
<keyword id="KW-0802">TPR repeat</keyword>
<reference key="1">
    <citation type="journal article" date="2002" name="Nature">
        <title>The genome sequence of Schizosaccharomyces pombe.</title>
        <authorList>
            <person name="Wood V."/>
            <person name="Gwilliam R."/>
            <person name="Rajandream M.A."/>
            <person name="Lyne M.H."/>
            <person name="Lyne R."/>
            <person name="Stewart A."/>
            <person name="Sgouros J.G."/>
            <person name="Peat N."/>
            <person name="Hayles J."/>
            <person name="Baker S.G."/>
            <person name="Basham D."/>
            <person name="Bowman S."/>
            <person name="Brooks K."/>
            <person name="Brown D."/>
            <person name="Brown S."/>
            <person name="Chillingworth T."/>
            <person name="Churcher C.M."/>
            <person name="Collins M."/>
            <person name="Connor R."/>
            <person name="Cronin A."/>
            <person name="Davis P."/>
            <person name="Feltwell T."/>
            <person name="Fraser A."/>
            <person name="Gentles S."/>
            <person name="Goble A."/>
            <person name="Hamlin N."/>
            <person name="Harris D.E."/>
            <person name="Hidalgo J."/>
            <person name="Hodgson G."/>
            <person name="Holroyd S."/>
            <person name="Hornsby T."/>
            <person name="Howarth S."/>
            <person name="Huckle E.J."/>
            <person name="Hunt S."/>
            <person name="Jagels K."/>
            <person name="James K.D."/>
            <person name="Jones L."/>
            <person name="Jones M."/>
            <person name="Leather S."/>
            <person name="McDonald S."/>
            <person name="McLean J."/>
            <person name="Mooney P."/>
            <person name="Moule S."/>
            <person name="Mungall K.L."/>
            <person name="Murphy L.D."/>
            <person name="Niblett D."/>
            <person name="Odell C."/>
            <person name="Oliver K."/>
            <person name="O'Neil S."/>
            <person name="Pearson D."/>
            <person name="Quail M.A."/>
            <person name="Rabbinowitsch E."/>
            <person name="Rutherford K.M."/>
            <person name="Rutter S."/>
            <person name="Saunders D."/>
            <person name="Seeger K."/>
            <person name="Sharp S."/>
            <person name="Skelton J."/>
            <person name="Simmonds M.N."/>
            <person name="Squares R."/>
            <person name="Squares S."/>
            <person name="Stevens K."/>
            <person name="Taylor K."/>
            <person name="Taylor R.G."/>
            <person name="Tivey A."/>
            <person name="Walsh S.V."/>
            <person name="Warren T."/>
            <person name="Whitehead S."/>
            <person name="Woodward J.R."/>
            <person name="Volckaert G."/>
            <person name="Aert R."/>
            <person name="Robben J."/>
            <person name="Grymonprez B."/>
            <person name="Weltjens I."/>
            <person name="Vanstreels E."/>
            <person name="Rieger M."/>
            <person name="Schaefer M."/>
            <person name="Mueller-Auer S."/>
            <person name="Gabel C."/>
            <person name="Fuchs M."/>
            <person name="Duesterhoeft A."/>
            <person name="Fritzc C."/>
            <person name="Holzer E."/>
            <person name="Moestl D."/>
            <person name="Hilbert H."/>
            <person name="Borzym K."/>
            <person name="Langer I."/>
            <person name="Beck A."/>
            <person name="Lehrach H."/>
            <person name="Reinhardt R."/>
            <person name="Pohl T.M."/>
            <person name="Eger P."/>
            <person name="Zimmermann W."/>
            <person name="Wedler H."/>
            <person name="Wambutt R."/>
            <person name="Purnelle B."/>
            <person name="Goffeau A."/>
            <person name="Cadieu E."/>
            <person name="Dreano S."/>
            <person name="Gloux S."/>
            <person name="Lelaure V."/>
            <person name="Mottier S."/>
            <person name="Galibert F."/>
            <person name="Aves S.J."/>
            <person name="Xiang Z."/>
            <person name="Hunt C."/>
            <person name="Moore K."/>
            <person name="Hurst S.M."/>
            <person name="Lucas M."/>
            <person name="Rochet M."/>
            <person name="Gaillardin C."/>
            <person name="Tallada V.A."/>
            <person name="Garzon A."/>
            <person name="Thode G."/>
            <person name="Daga R.R."/>
            <person name="Cruzado L."/>
            <person name="Jimenez J."/>
            <person name="Sanchez M."/>
            <person name="del Rey F."/>
            <person name="Benito J."/>
            <person name="Dominguez A."/>
            <person name="Revuelta J.L."/>
            <person name="Moreno S."/>
            <person name="Armstrong J."/>
            <person name="Forsburg S.L."/>
            <person name="Cerutti L."/>
            <person name="Lowe T."/>
            <person name="McCombie W.R."/>
            <person name="Paulsen I."/>
            <person name="Potashkin J."/>
            <person name="Shpakovski G.V."/>
            <person name="Ussery D."/>
            <person name="Barrell B.G."/>
            <person name="Nurse P."/>
        </authorList>
    </citation>
    <scope>NUCLEOTIDE SEQUENCE [LARGE SCALE GENOMIC DNA]</scope>
    <source>
        <strain>972 / ATCC 24843</strain>
    </source>
</reference>
<reference key="2">
    <citation type="journal article" date="2002" name="Yeast">
        <title>Genome-wide search of Schizosaccharomyces pombe genes causing overexpression-mediated cell cycle defects.</title>
        <authorList>
            <person name="Tallada V.A."/>
            <person name="Daga R.R."/>
            <person name="Palomeque C."/>
            <person name="Garzon A."/>
            <person name="Jimenez J."/>
        </authorList>
    </citation>
    <scope>FUNCTION</scope>
</reference>
<reference key="3">
    <citation type="journal article" date="2006" name="Nat. Biotechnol.">
        <title>ORFeome cloning and global analysis of protein localization in the fission yeast Schizosaccharomyces pombe.</title>
        <authorList>
            <person name="Matsuyama A."/>
            <person name="Arai R."/>
            <person name="Yashiroda Y."/>
            <person name="Shirai A."/>
            <person name="Kamata A."/>
            <person name="Sekido S."/>
            <person name="Kobayashi Y."/>
            <person name="Hashimoto A."/>
            <person name="Hamamoto M."/>
            <person name="Hiraoka Y."/>
            <person name="Horinouchi S."/>
            <person name="Yoshida M."/>
        </authorList>
    </citation>
    <scope>SUBCELLULAR LOCATION [LARGE SCALE ANALYSIS]</scope>
</reference>
<dbReference type="EMBL" id="CU329671">
    <property type="protein sequence ID" value="CAA18435.2"/>
    <property type="molecule type" value="Genomic_DNA"/>
</dbReference>
<dbReference type="RefSeq" id="NP_595921.2">
    <property type="nucleotide sequence ID" value="NM_001021829.2"/>
</dbReference>
<dbReference type="SMR" id="O60110"/>
<dbReference type="BioGRID" id="276418">
    <property type="interactions" value="2"/>
</dbReference>
<dbReference type="FunCoup" id="O60110">
    <property type="interactions" value="258"/>
</dbReference>
<dbReference type="STRING" id="284812.O60110"/>
<dbReference type="iPTMnet" id="O60110"/>
<dbReference type="PaxDb" id="4896-SPBC15C4.01c.1"/>
<dbReference type="EnsemblFungi" id="SPBC15C4.01c.1">
    <property type="protein sequence ID" value="SPBC15C4.01c.1:pep"/>
    <property type="gene ID" value="SPBC15C4.01c"/>
</dbReference>
<dbReference type="GeneID" id="2539872"/>
<dbReference type="KEGG" id="spo:2539872"/>
<dbReference type="PomBase" id="SPBC15C4.01c">
    <property type="gene designation" value="oca3"/>
</dbReference>
<dbReference type="VEuPathDB" id="FungiDB:SPBC15C4.01c"/>
<dbReference type="eggNOG" id="KOG3060">
    <property type="taxonomic scope" value="Eukaryota"/>
</dbReference>
<dbReference type="HOGENOM" id="CLU_052388_1_2_1"/>
<dbReference type="InParanoid" id="O60110"/>
<dbReference type="OMA" id="MSDQEGW"/>
<dbReference type="PhylomeDB" id="O60110"/>
<dbReference type="PRO" id="PR:O60110"/>
<dbReference type="Proteomes" id="UP000002485">
    <property type="component" value="Chromosome II"/>
</dbReference>
<dbReference type="GO" id="GO:0032153">
    <property type="term" value="C:cell division site"/>
    <property type="evidence" value="ECO:0007005"/>
    <property type="project" value="PomBase"/>
</dbReference>
<dbReference type="GO" id="GO:0005829">
    <property type="term" value="C:cytosol"/>
    <property type="evidence" value="ECO:0007005"/>
    <property type="project" value="PomBase"/>
</dbReference>
<dbReference type="GO" id="GO:0072546">
    <property type="term" value="C:EMC complex"/>
    <property type="evidence" value="ECO:0000318"/>
    <property type="project" value="GO_Central"/>
</dbReference>
<dbReference type="GO" id="GO:0005634">
    <property type="term" value="C:nucleus"/>
    <property type="evidence" value="ECO:0007005"/>
    <property type="project" value="PomBase"/>
</dbReference>
<dbReference type="GO" id="GO:0045048">
    <property type="term" value="P:protein insertion into ER membrane"/>
    <property type="evidence" value="ECO:0000305"/>
    <property type="project" value="PomBase"/>
</dbReference>
<dbReference type="FunFam" id="1.25.40.10:FF:001208">
    <property type="entry name" value="Tetratricopeptide repeat domain-containing protein"/>
    <property type="match status" value="1"/>
</dbReference>
<dbReference type="Gene3D" id="1.25.40.10">
    <property type="entry name" value="Tetratricopeptide repeat domain"/>
    <property type="match status" value="1"/>
</dbReference>
<dbReference type="InterPro" id="IPR039856">
    <property type="entry name" value="EMC2-like"/>
</dbReference>
<dbReference type="InterPro" id="IPR011990">
    <property type="entry name" value="TPR-like_helical_dom_sf"/>
</dbReference>
<dbReference type="InterPro" id="IPR055217">
    <property type="entry name" value="TPR_EMC2"/>
</dbReference>
<dbReference type="InterPro" id="IPR019734">
    <property type="entry name" value="TPR_rpt"/>
</dbReference>
<dbReference type="PANTHER" id="PTHR12760">
    <property type="entry name" value="TETRATRICOPEPTIDE REPEAT PROTEIN"/>
    <property type="match status" value="1"/>
</dbReference>
<dbReference type="Pfam" id="PF22890">
    <property type="entry name" value="TPR_EMC2"/>
    <property type="match status" value="1"/>
</dbReference>
<dbReference type="SUPFAM" id="SSF48452">
    <property type="entry name" value="TPR-like"/>
    <property type="match status" value="1"/>
</dbReference>
<dbReference type="PROSITE" id="PS50005">
    <property type="entry name" value="TPR"/>
    <property type="match status" value="2"/>
</dbReference>
<dbReference type="PROSITE" id="PS50293">
    <property type="entry name" value="TPR_REGION"/>
    <property type="match status" value="1"/>
</dbReference>
<organism>
    <name type="scientific">Schizosaccharomyces pombe (strain 972 / ATCC 24843)</name>
    <name type="common">Fission yeast</name>
    <dbReference type="NCBI Taxonomy" id="284812"/>
    <lineage>
        <taxon>Eukaryota</taxon>
        <taxon>Fungi</taxon>
        <taxon>Dikarya</taxon>
        <taxon>Ascomycota</taxon>
        <taxon>Taphrinomycotina</taxon>
        <taxon>Schizosaccharomycetes</taxon>
        <taxon>Schizosaccharomycetales</taxon>
        <taxon>Schizosaccharomycetaceae</taxon>
        <taxon>Schizosaccharomyces</taxon>
    </lineage>
</organism>
<protein>
    <recommendedName>
        <fullName>TPR repeat protein oca3</fullName>
    </recommendedName>
    <alternativeName>
        <fullName>Overexpression-mediated cell cycle arrest protein 3</fullName>
    </alternativeName>
</protein>
<sequence>MSNSILKVPDQNPQEIVALFSQQEAYAKLGKYKDEIWDVYQKVFIAALTTGETVLAKKCWNRLNDRFHKSPRVEGLYGMFLEATASEKDAMSYYNSKLSEDPTHTVIYKRKLALLRSMGQTKECIQGLINYLDTFYNDLEAWAELADIYVSVEAFESAIFCYEEMVLLQPFEPRLFARLGDLYFVLAQSNATNYWFSLKHYCRSVEICEEYFHGWFGISKCCQQLLELSRTELKRLLSKVNEKISDTFPDTESVRQLYQLSLKKSDLFAQKQPKLKALLEQC</sequence>